<reference key="1">
    <citation type="journal article" date="2007" name="PLoS Genet.">
        <title>Patterns and implications of gene gain and loss in the evolution of Prochlorococcus.</title>
        <authorList>
            <person name="Kettler G.C."/>
            <person name="Martiny A.C."/>
            <person name="Huang K."/>
            <person name="Zucker J."/>
            <person name="Coleman M.L."/>
            <person name="Rodrigue S."/>
            <person name="Chen F."/>
            <person name="Lapidus A."/>
            <person name="Ferriera S."/>
            <person name="Johnson J."/>
            <person name="Steglich C."/>
            <person name="Church G.M."/>
            <person name="Richardson P."/>
            <person name="Chisholm S.W."/>
        </authorList>
    </citation>
    <scope>NUCLEOTIDE SEQUENCE [LARGE SCALE GENOMIC DNA]</scope>
    <source>
        <strain>MIT 9303</strain>
    </source>
</reference>
<accession>A2C717</accession>
<gene>
    <name evidence="1" type="primary">prmA</name>
    <name type="ordered locus">P9303_05251</name>
</gene>
<dbReference type="EC" id="2.1.1.-" evidence="1"/>
<dbReference type="EMBL" id="CP000554">
    <property type="protein sequence ID" value="ABM77277.1"/>
    <property type="molecule type" value="Genomic_DNA"/>
</dbReference>
<dbReference type="RefSeq" id="WP_011825200.1">
    <property type="nucleotide sequence ID" value="NC_008820.1"/>
</dbReference>
<dbReference type="SMR" id="A2C717"/>
<dbReference type="STRING" id="59922.P9303_05251"/>
<dbReference type="KEGG" id="pmf:P9303_05251"/>
<dbReference type="HOGENOM" id="CLU_049382_0_1_3"/>
<dbReference type="BioCyc" id="PMAR59922:G1G80-485-MONOMER"/>
<dbReference type="Proteomes" id="UP000002274">
    <property type="component" value="Chromosome"/>
</dbReference>
<dbReference type="GO" id="GO:0005737">
    <property type="term" value="C:cytoplasm"/>
    <property type="evidence" value="ECO:0007669"/>
    <property type="project" value="UniProtKB-SubCell"/>
</dbReference>
<dbReference type="GO" id="GO:0016279">
    <property type="term" value="F:protein-lysine N-methyltransferase activity"/>
    <property type="evidence" value="ECO:0007669"/>
    <property type="project" value="RHEA"/>
</dbReference>
<dbReference type="GO" id="GO:0032259">
    <property type="term" value="P:methylation"/>
    <property type="evidence" value="ECO:0007669"/>
    <property type="project" value="UniProtKB-KW"/>
</dbReference>
<dbReference type="CDD" id="cd02440">
    <property type="entry name" value="AdoMet_MTases"/>
    <property type="match status" value="1"/>
</dbReference>
<dbReference type="Gene3D" id="3.40.50.150">
    <property type="entry name" value="Vaccinia Virus protein VP39"/>
    <property type="match status" value="1"/>
</dbReference>
<dbReference type="HAMAP" id="MF_00735">
    <property type="entry name" value="Methyltr_PrmA"/>
    <property type="match status" value="1"/>
</dbReference>
<dbReference type="InterPro" id="IPR050078">
    <property type="entry name" value="Ribosomal_L11_MeTrfase_PrmA"/>
</dbReference>
<dbReference type="InterPro" id="IPR004498">
    <property type="entry name" value="Ribosomal_PrmA_MeTrfase"/>
</dbReference>
<dbReference type="InterPro" id="IPR029063">
    <property type="entry name" value="SAM-dependent_MTases_sf"/>
</dbReference>
<dbReference type="NCBIfam" id="TIGR00406">
    <property type="entry name" value="prmA"/>
    <property type="match status" value="1"/>
</dbReference>
<dbReference type="PANTHER" id="PTHR43648">
    <property type="entry name" value="ELECTRON TRANSFER FLAVOPROTEIN BETA SUBUNIT LYSINE METHYLTRANSFERASE"/>
    <property type="match status" value="1"/>
</dbReference>
<dbReference type="PANTHER" id="PTHR43648:SF1">
    <property type="entry name" value="ELECTRON TRANSFER FLAVOPROTEIN BETA SUBUNIT LYSINE METHYLTRANSFERASE"/>
    <property type="match status" value="1"/>
</dbReference>
<dbReference type="Pfam" id="PF06325">
    <property type="entry name" value="PrmA"/>
    <property type="match status" value="1"/>
</dbReference>
<dbReference type="SUPFAM" id="SSF53335">
    <property type="entry name" value="S-adenosyl-L-methionine-dependent methyltransferases"/>
    <property type="match status" value="1"/>
</dbReference>
<proteinExistence type="inferred from homology"/>
<keyword id="KW-0963">Cytoplasm</keyword>
<keyword id="KW-0489">Methyltransferase</keyword>
<keyword id="KW-0949">S-adenosyl-L-methionine</keyword>
<keyword id="KW-0808">Transferase</keyword>
<feature type="chain" id="PRO_1000046058" description="Ribosomal protein L11 methyltransferase">
    <location>
        <begin position="1"/>
        <end position="301"/>
    </location>
</feature>
<feature type="binding site" evidence="1">
    <location>
        <position position="146"/>
    </location>
    <ligand>
        <name>S-adenosyl-L-methionine</name>
        <dbReference type="ChEBI" id="CHEBI:59789"/>
    </ligand>
</feature>
<feature type="binding site" evidence="1">
    <location>
        <position position="167"/>
    </location>
    <ligand>
        <name>S-adenosyl-L-methionine</name>
        <dbReference type="ChEBI" id="CHEBI:59789"/>
    </ligand>
</feature>
<feature type="binding site" evidence="1">
    <location>
        <position position="189"/>
    </location>
    <ligand>
        <name>S-adenosyl-L-methionine</name>
        <dbReference type="ChEBI" id="CHEBI:59789"/>
    </ligand>
</feature>
<feature type="binding site" evidence="1">
    <location>
        <position position="237"/>
    </location>
    <ligand>
        <name>S-adenosyl-L-methionine</name>
        <dbReference type="ChEBI" id="CHEBI:59789"/>
    </ligand>
</feature>
<evidence type="ECO:0000255" key="1">
    <source>
        <dbReference type="HAMAP-Rule" id="MF_00735"/>
    </source>
</evidence>
<organism>
    <name type="scientific">Prochlorococcus marinus (strain MIT 9303)</name>
    <dbReference type="NCBI Taxonomy" id="59922"/>
    <lineage>
        <taxon>Bacteria</taxon>
        <taxon>Bacillati</taxon>
        <taxon>Cyanobacteriota</taxon>
        <taxon>Cyanophyceae</taxon>
        <taxon>Synechococcales</taxon>
        <taxon>Prochlorococcaceae</taxon>
        <taxon>Prochlorococcus</taxon>
    </lineage>
</organism>
<sequence length="301" mass="32950">MNSASACCWWRLALPIADELEESLIWKLTELGISRIAVQHVPEKAERTLLAWLPSSEWSESDRDQLMVNLRPLAEPFGLQLANPTWCEVADEDWSLNWKQHWQSDPVGQRLLILPAWLDLPQEYADRLVVRMDPGSAFGTGSHPSTRLCLEALEKNPPLGLRVADLGCGSGVLGFAALGFGARQVLAADTDSQAVCASRANAELNQLDLDRFRVVHGSVDALSAQLQGEVVDLLLCNILAPVIEALASSFDQLLSANGRCLLSGLLVDQAPRLQVVLEALGWRVNSLTVQGCWGLLDVSKR</sequence>
<name>PRMA_PROM3</name>
<protein>
    <recommendedName>
        <fullName evidence="1">Ribosomal protein L11 methyltransferase</fullName>
        <shortName evidence="1">L11 Mtase</shortName>
        <ecNumber evidence="1">2.1.1.-</ecNumber>
    </recommendedName>
</protein>
<comment type="function">
    <text evidence="1">Methylates ribosomal protein L11.</text>
</comment>
<comment type="catalytic activity">
    <reaction evidence="1">
        <text>L-lysyl-[protein] + 3 S-adenosyl-L-methionine = N(6),N(6),N(6)-trimethyl-L-lysyl-[protein] + 3 S-adenosyl-L-homocysteine + 3 H(+)</text>
        <dbReference type="Rhea" id="RHEA:54192"/>
        <dbReference type="Rhea" id="RHEA-COMP:9752"/>
        <dbReference type="Rhea" id="RHEA-COMP:13826"/>
        <dbReference type="ChEBI" id="CHEBI:15378"/>
        <dbReference type="ChEBI" id="CHEBI:29969"/>
        <dbReference type="ChEBI" id="CHEBI:57856"/>
        <dbReference type="ChEBI" id="CHEBI:59789"/>
        <dbReference type="ChEBI" id="CHEBI:61961"/>
    </reaction>
</comment>
<comment type="subcellular location">
    <subcellularLocation>
        <location evidence="1">Cytoplasm</location>
    </subcellularLocation>
</comment>
<comment type="similarity">
    <text evidence="1">Belongs to the methyltransferase superfamily. PrmA family.</text>
</comment>